<gene>
    <name evidence="1" type="primary">glnD</name>
    <name type="ordered locus">ACICU_01512</name>
</gene>
<protein>
    <recommendedName>
        <fullName evidence="1">Bifunctional uridylyltransferase/uridylyl-removing enzyme</fullName>
        <shortName evidence="1">UTase/UR</shortName>
    </recommendedName>
    <alternativeName>
        <fullName evidence="1">Bifunctional [protein-PII] modification enzyme</fullName>
    </alternativeName>
    <alternativeName>
        <fullName evidence="1">Bifunctional nitrogen sensor protein</fullName>
    </alternativeName>
    <domain>
        <recommendedName>
            <fullName evidence="1">[Protein-PII] uridylyltransferase</fullName>
            <shortName evidence="1">PII uridylyltransferase</shortName>
            <shortName evidence="1">UTase</shortName>
            <ecNumber evidence="1">2.7.7.59</ecNumber>
        </recommendedName>
    </domain>
    <domain>
        <recommendedName>
            <fullName evidence="1">[Protein-PII]-UMP uridylyl-removing enzyme</fullName>
            <shortName evidence="1">UR</shortName>
            <ecNumber evidence="1">3.1.4.-</ecNumber>
        </recommendedName>
    </domain>
</protein>
<accession>B2HYT7</accession>
<reference key="1">
    <citation type="journal article" date="2008" name="Antimicrob. Agents Chemother.">
        <title>Whole-genome pyrosequencing of an epidemic multidrug-resistant Acinetobacter baumannii strain belonging to the European clone II group.</title>
        <authorList>
            <person name="Iacono M."/>
            <person name="Villa L."/>
            <person name="Fortini D."/>
            <person name="Bordoni R."/>
            <person name="Imperi F."/>
            <person name="Bonnal R.J."/>
            <person name="Sicheritz-Ponten T."/>
            <person name="De Bellis G."/>
            <person name="Visca P."/>
            <person name="Cassone A."/>
            <person name="Carattoli A."/>
        </authorList>
    </citation>
    <scope>NUCLEOTIDE SEQUENCE [LARGE SCALE GENOMIC DNA]</scope>
    <source>
        <strain>ACICU</strain>
    </source>
</reference>
<dbReference type="EC" id="2.7.7.59" evidence="1"/>
<dbReference type="EC" id="3.1.4.-" evidence="1"/>
<dbReference type="EMBL" id="CP000863">
    <property type="protein sequence ID" value="ACC56824.1"/>
    <property type="molecule type" value="Genomic_DNA"/>
</dbReference>
<dbReference type="RefSeq" id="WP_000611175.1">
    <property type="nucleotide sequence ID" value="NZ_CP031380.1"/>
</dbReference>
<dbReference type="SMR" id="B2HYT7"/>
<dbReference type="KEGG" id="abc:ACICU_01512"/>
<dbReference type="HOGENOM" id="CLU_012833_0_0_6"/>
<dbReference type="Proteomes" id="UP000008839">
    <property type="component" value="Chromosome"/>
</dbReference>
<dbReference type="GO" id="GO:0008773">
    <property type="term" value="F:[protein-PII] uridylyltransferase activity"/>
    <property type="evidence" value="ECO:0007669"/>
    <property type="project" value="UniProtKB-UniRule"/>
</dbReference>
<dbReference type="GO" id="GO:0008081">
    <property type="term" value="F:phosphoric diester hydrolase activity"/>
    <property type="evidence" value="ECO:0007669"/>
    <property type="project" value="UniProtKB-UniRule"/>
</dbReference>
<dbReference type="GO" id="GO:0006808">
    <property type="term" value="P:regulation of nitrogen utilization"/>
    <property type="evidence" value="ECO:0007669"/>
    <property type="project" value="UniProtKB-UniRule"/>
</dbReference>
<dbReference type="CDD" id="cd04899">
    <property type="entry name" value="ACT_ACR-UUR-like_2"/>
    <property type="match status" value="1"/>
</dbReference>
<dbReference type="CDD" id="cd04900">
    <property type="entry name" value="ACT_UUR-like_1"/>
    <property type="match status" value="1"/>
</dbReference>
<dbReference type="CDD" id="cd00077">
    <property type="entry name" value="HDc"/>
    <property type="match status" value="1"/>
</dbReference>
<dbReference type="CDD" id="cd05401">
    <property type="entry name" value="NT_GlnE_GlnD_like"/>
    <property type="match status" value="1"/>
</dbReference>
<dbReference type="Gene3D" id="1.10.3210.10">
    <property type="entry name" value="Hypothetical protein af1432"/>
    <property type="match status" value="1"/>
</dbReference>
<dbReference type="Gene3D" id="1.20.120.330">
    <property type="entry name" value="Nucleotidyltransferases domain 2"/>
    <property type="match status" value="1"/>
</dbReference>
<dbReference type="HAMAP" id="MF_00277">
    <property type="entry name" value="PII_uridylyl_transf"/>
    <property type="match status" value="1"/>
</dbReference>
<dbReference type="InterPro" id="IPR045865">
    <property type="entry name" value="ACT-like_dom_sf"/>
</dbReference>
<dbReference type="InterPro" id="IPR002912">
    <property type="entry name" value="ACT_dom"/>
</dbReference>
<dbReference type="InterPro" id="IPR003607">
    <property type="entry name" value="HD/PDEase_dom"/>
</dbReference>
<dbReference type="InterPro" id="IPR006674">
    <property type="entry name" value="HD_domain"/>
</dbReference>
<dbReference type="InterPro" id="IPR043519">
    <property type="entry name" value="NT_sf"/>
</dbReference>
<dbReference type="InterPro" id="IPR013546">
    <property type="entry name" value="PII_UdlTrfase/GS_AdlTrfase"/>
</dbReference>
<dbReference type="InterPro" id="IPR002934">
    <property type="entry name" value="Polymerase_NTP_transf_dom"/>
</dbReference>
<dbReference type="InterPro" id="IPR010043">
    <property type="entry name" value="UTase/UR"/>
</dbReference>
<dbReference type="NCBIfam" id="TIGR01693">
    <property type="entry name" value="UTase_glnD"/>
    <property type="match status" value="1"/>
</dbReference>
<dbReference type="PANTHER" id="PTHR47320">
    <property type="entry name" value="BIFUNCTIONAL URIDYLYLTRANSFERASE/URIDYLYL-REMOVING ENZYME"/>
    <property type="match status" value="1"/>
</dbReference>
<dbReference type="PANTHER" id="PTHR47320:SF1">
    <property type="entry name" value="BIFUNCTIONAL URIDYLYLTRANSFERASE_URIDYLYL-REMOVING ENZYME"/>
    <property type="match status" value="1"/>
</dbReference>
<dbReference type="Pfam" id="PF01842">
    <property type="entry name" value="ACT"/>
    <property type="match status" value="1"/>
</dbReference>
<dbReference type="Pfam" id="PF08335">
    <property type="entry name" value="GlnD_UR_UTase"/>
    <property type="match status" value="1"/>
</dbReference>
<dbReference type="Pfam" id="PF01966">
    <property type="entry name" value="HD"/>
    <property type="match status" value="1"/>
</dbReference>
<dbReference type="Pfam" id="PF01909">
    <property type="entry name" value="NTP_transf_2"/>
    <property type="match status" value="1"/>
</dbReference>
<dbReference type="PIRSF" id="PIRSF006288">
    <property type="entry name" value="PII_uridyltransf"/>
    <property type="match status" value="1"/>
</dbReference>
<dbReference type="SMART" id="SM00471">
    <property type="entry name" value="HDc"/>
    <property type="match status" value="1"/>
</dbReference>
<dbReference type="SUPFAM" id="SSF55021">
    <property type="entry name" value="ACT-like"/>
    <property type="match status" value="1"/>
</dbReference>
<dbReference type="SUPFAM" id="SSF109604">
    <property type="entry name" value="HD-domain/PDEase-like"/>
    <property type="match status" value="1"/>
</dbReference>
<dbReference type="SUPFAM" id="SSF81301">
    <property type="entry name" value="Nucleotidyltransferase"/>
    <property type="match status" value="1"/>
</dbReference>
<dbReference type="SUPFAM" id="SSF81593">
    <property type="entry name" value="Nucleotidyltransferase substrate binding subunit/domain"/>
    <property type="match status" value="1"/>
</dbReference>
<dbReference type="PROSITE" id="PS51671">
    <property type="entry name" value="ACT"/>
    <property type="match status" value="2"/>
</dbReference>
<dbReference type="PROSITE" id="PS51831">
    <property type="entry name" value="HD"/>
    <property type="match status" value="1"/>
</dbReference>
<name>GLND_ACIBC</name>
<proteinExistence type="inferred from homology"/>
<sequence>MINTSPLLNYVSSHHDIKAINQWRTDVEKQLQDSYENGQSIREIIKARSDLVDEALVFLWKHAELDQSKLGLFAVGGYGRREMLPYSDVDIMILSEDEISEENEKRISTFISSLWDVGNFKPGISVRTIQSCVEQAATDLTVATTLIEARLITGNTQLAKWPRRIVSQTWTDKTFYDAKMAEQAKRYHQHNNTESNLEPDIKNAPGGIRDINQIGWIAKRHFRVNRIYDLVHLGFISEFELAVLEEAESFLWEIRHHLHRLAKRDENRLLFDHQREIAAKFGYVRQEGQPVNYGVEQFMKRYYRTAQQVSTLNEMLLAYFSESVITPRLPNYERKIEVVNDHFKIVDNKLAVQHHKIFAEHPSAILELFYILANRPDIEGIRARTLRLLILAAKRINQSYRDNPEHQALFMSIIRSPYRLYDTLVAMKRYGVLGNYIPAFAQIMGLMQYDLFHIYTVDAHTLLLLRNLNRFREPEFAKEFPVVSSVFQRLARQDIVFIAALFHDIAKGRGGDHSELGAEDAIEFGRAHGFTERECKLIAWLIQNHLLMSLTAQKKDISDPDVVKDFAEKLGDMEHLDYLYTLTVADINATNPKLWNTWRASLMRQLYTHARDVIRTGLGRPVDYQMLIEDTKFAASELLVNNFALADVEKVWQELGDEYFIKESADEIAWHTQAILKHGDNPEPLVLLRAHRKAAQDAVQIFIYTRDQPNLFATTVAVLDRMNLDVQDAKIITASTAFSLDTYVVLDRFGTLLTDPEREETVKNALVKALSQPDQYPGLMQRRIPRQLRHFDIENTVDVTLNEALQQNMVEISTLDHPGLLARVGGLFMMQGLDIHSARIATLGERAEDIFFVTKKDGKPLNNEEVKLFSEKLKAALDEASNQICQH</sequence>
<organism>
    <name type="scientific">Acinetobacter baumannii (strain ACICU)</name>
    <dbReference type="NCBI Taxonomy" id="405416"/>
    <lineage>
        <taxon>Bacteria</taxon>
        <taxon>Pseudomonadati</taxon>
        <taxon>Pseudomonadota</taxon>
        <taxon>Gammaproteobacteria</taxon>
        <taxon>Moraxellales</taxon>
        <taxon>Moraxellaceae</taxon>
        <taxon>Acinetobacter</taxon>
        <taxon>Acinetobacter calcoaceticus/baumannii complex</taxon>
    </lineage>
</organism>
<feature type="chain" id="PRO_1000114746" description="Bifunctional uridylyltransferase/uridylyl-removing enzyme">
    <location>
        <begin position="1"/>
        <end position="887"/>
    </location>
</feature>
<feature type="domain" description="HD" evidence="2">
    <location>
        <begin position="457"/>
        <end position="579"/>
    </location>
</feature>
<feature type="domain" description="ACT 1" evidence="1">
    <location>
        <begin position="700"/>
        <end position="782"/>
    </location>
</feature>
<feature type="domain" description="ACT 2" evidence="1">
    <location>
        <begin position="809"/>
        <end position="887"/>
    </location>
</feature>
<feature type="region of interest" description="Uridylyltransferase">
    <location>
        <begin position="1"/>
        <end position="337"/>
    </location>
</feature>
<feature type="region of interest" description="Uridylyl-removing">
    <location>
        <begin position="339"/>
        <end position="699"/>
    </location>
</feature>
<keyword id="KW-0378">Hydrolase</keyword>
<keyword id="KW-0460">Magnesium</keyword>
<keyword id="KW-0511">Multifunctional enzyme</keyword>
<keyword id="KW-0548">Nucleotidyltransferase</keyword>
<keyword id="KW-0677">Repeat</keyword>
<keyword id="KW-0808">Transferase</keyword>
<comment type="function">
    <text evidence="1">Modifies, by uridylylation and deuridylylation, the PII regulatory proteins (GlnB and homologs), in response to the nitrogen status of the cell that GlnD senses through the glutamine level. Under low glutamine levels, catalyzes the conversion of the PII proteins and UTP to PII-UMP and PPi, while under higher glutamine levels, GlnD hydrolyzes PII-UMP to PII and UMP (deuridylylation). Thus, controls uridylylation state and activity of the PII proteins, and plays an important role in the regulation of nitrogen assimilation and metabolism.</text>
</comment>
<comment type="catalytic activity">
    <reaction evidence="1">
        <text>[protein-PII]-L-tyrosine + UTP = [protein-PII]-uridylyl-L-tyrosine + diphosphate</text>
        <dbReference type="Rhea" id="RHEA:13673"/>
        <dbReference type="Rhea" id="RHEA-COMP:12147"/>
        <dbReference type="Rhea" id="RHEA-COMP:12148"/>
        <dbReference type="ChEBI" id="CHEBI:33019"/>
        <dbReference type="ChEBI" id="CHEBI:46398"/>
        <dbReference type="ChEBI" id="CHEBI:46858"/>
        <dbReference type="ChEBI" id="CHEBI:90602"/>
        <dbReference type="EC" id="2.7.7.59"/>
    </reaction>
</comment>
<comment type="catalytic activity">
    <reaction evidence="1">
        <text>[protein-PII]-uridylyl-L-tyrosine + H2O = [protein-PII]-L-tyrosine + UMP + H(+)</text>
        <dbReference type="Rhea" id="RHEA:48600"/>
        <dbReference type="Rhea" id="RHEA-COMP:12147"/>
        <dbReference type="Rhea" id="RHEA-COMP:12148"/>
        <dbReference type="ChEBI" id="CHEBI:15377"/>
        <dbReference type="ChEBI" id="CHEBI:15378"/>
        <dbReference type="ChEBI" id="CHEBI:46858"/>
        <dbReference type="ChEBI" id="CHEBI:57865"/>
        <dbReference type="ChEBI" id="CHEBI:90602"/>
    </reaction>
</comment>
<comment type="cofactor">
    <cofactor evidence="1">
        <name>Mg(2+)</name>
        <dbReference type="ChEBI" id="CHEBI:18420"/>
    </cofactor>
</comment>
<comment type="activity regulation">
    <text evidence="1">Uridylyltransferase (UTase) activity is inhibited by glutamine, while glutamine activates uridylyl-removing (UR) activity.</text>
</comment>
<comment type="domain">
    <text evidence="1">Has four distinct domains: an N-terminal nucleotidyltransferase (NT) domain responsible for UTase activity, a central HD domain that encodes UR activity, and two C-terminal ACT domains that seem to have a role in glutamine sensing.</text>
</comment>
<comment type="similarity">
    <text evidence="1">Belongs to the GlnD family.</text>
</comment>
<evidence type="ECO:0000255" key="1">
    <source>
        <dbReference type="HAMAP-Rule" id="MF_00277"/>
    </source>
</evidence>
<evidence type="ECO:0000255" key="2">
    <source>
        <dbReference type="PROSITE-ProRule" id="PRU01175"/>
    </source>
</evidence>